<sequence>MRGNPEVIDYLNMLIGGELAARDQYLIHSRMYEDWGLTKY</sequence>
<name>BFRH_ABSSP</name>
<protein>
    <recommendedName>
        <fullName>Bacterioferritin heavy chain</fullName>
        <shortName>BFR</shortName>
    </recommendedName>
</protein>
<accession>Q10985</accession>
<organism>
    <name type="scientific">Absidia spinosa</name>
    <dbReference type="NCBI Taxonomy" id="126712"/>
    <lineage>
        <taxon>Eukaryota</taxon>
        <taxon>Fungi</taxon>
        <taxon>Fungi incertae sedis</taxon>
        <taxon>Mucoromycota</taxon>
        <taxon>Mucoromycotina</taxon>
        <taxon>Mucoromycetes</taxon>
        <taxon>Mucorales</taxon>
        <taxon>Cunninghamellaceae</taxon>
        <taxon>Absidia</taxon>
    </lineage>
</organism>
<comment type="function">
    <text evidence="1 5">May perform analogous functions in iron detoxification and storage to that of animal ferritins (By similarity). Contains approximately 750 iron atoms per molecule.</text>
</comment>
<comment type="subunit">
    <text evidence="5">Oligomer consisting of two types of subunits: light chain and heavy chain.</text>
</comment>
<comment type="similarity">
    <text evidence="3">Belongs to the bacterioferritin family.</text>
</comment>
<feature type="chain" id="PRO_0000302881" description="Bacterioferritin heavy chain">
    <location>
        <begin position="1"/>
        <end position="40" status="greater than"/>
    </location>
</feature>
<feature type="domain" description="Ferritin-like diiron" evidence="4">
    <location>
        <begin position="1"/>
        <end position="40" status="greater than"/>
    </location>
</feature>
<feature type="binding site" evidence="2 4">
    <location>
        <position position="18"/>
    </location>
    <ligand>
        <name>Fe cation</name>
        <dbReference type="ChEBI" id="CHEBI:24875"/>
        <label>1</label>
    </ligand>
</feature>
<feature type="unsure residue" evidence="5">
    <location>
        <position position="35"/>
    </location>
</feature>
<feature type="unsure residue" evidence="5">
    <location>
        <begin position="38"/>
        <end position="39"/>
    </location>
</feature>
<feature type="non-terminal residue" evidence="6">
    <location>
        <position position="40"/>
    </location>
</feature>
<evidence type="ECO:0000250" key="1"/>
<evidence type="ECO:0000250" key="2">
    <source>
        <dbReference type="UniProtKB" id="P0ABD3"/>
    </source>
</evidence>
<evidence type="ECO:0000255" key="3"/>
<evidence type="ECO:0000255" key="4">
    <source>
        <dbReference type="PROSITE-ProRule" id="PRU00085"/>
    </source>
</evidence>
<evidence type="ECO:0000269" key="5">
    <source>
    </source>
</evidence>
<evidence type="ECO:0000303" key="6">
    <source>
    </source>
</evidence>
<evidence type="ECO:0000305" key="7"/>
<dbReference type="PIR" id="S70494">
    <property type="entry name" value="S70494"/>
</dbReference>
<dbReference type="SMR" id="Q10985"/>
<dbReference type="GO" id="GO:0008199">
    <property type="term" value="F:ferric iron binding"/>
    <property type="evidence" value="ECO:0007669"/>
    <property type="project" value="InterPro"/>
</dbReference>
<dbReference type="GO" id="GO:0006879">
    <property type="term" value="P:intracellular iron ion homeostasis"/>
    <property type="evidence" value="ECO:0007669"/>
    <property type="project" value="UniProtKB-KW"/>
</dbReference>
<dbReference type="GO" id="GO:0006826">
    <property type="term" value="P:iron ion transport"/>
    <property type="evidence" value="ECO:0007669"/>
    <property type="project" value="InterPro"/>
</dbReference>
<dbReference type="Gene3D" id="1.20.1260.10">
    <property type="match status" value="1"/>
</dbReference>
<dbReference type="InterPro" id="IPR002024">
    <property type="entry name" value="Bacterioferritin"/>
</dbReference>
<dbReference type="InterPro" id="IPR012347">
    <property type="entry name" value="Ferritin-like"/>
</dbReference>
<dbReference type="InterPro" id="IPR009040">
    <property type="entry name" value="Ferritin-like_diiron"/>
</dbReference>
<dbReference type="InterPro" id="IPR009078">
    <property type="entry name" value="Ferritin-like_SF"/>
</dbReference>
<dbReference type="PRINTS" id="PR00601">
    <property type="entry name" value="BACFERRITIN"/>
</dbReference>
<dbReference type="SUPFAM" id="SSF47240">
    <property type="entry name" value="Ferritin-like"/>
    <property type="match status" value="1"/>
</dbReference>
<dbReference type="PROSITE" id="PS50905">
    <property type="entry name" value="FERRITIN_LIKE"/>
    <property type="match status" value="1"/>
</dbReference>
<keyword id="KW-0903">Direct protein sequencing</keyword>
<keyword id="KW-0408">Iron</keyword>
<keyword id="KW-0409">Iron storage</keyword>
<keyword id="KW-0479">Metal-binding</keyword>
<reference evidence="7" key="1">
    <citation type="journal article" date="1996" name="FEBS Lett.">
        <title>Fungal ferritins: the ferritin from mycelia of Absidia spinosa is a bacterioferritin.</title>
        <authorList>
            <person name="Carrano C.J."/>
            <person name="Boehnke R."/>
            <person name="Matzanke B.F."/>
        </authorList>
    </citation>
    <scope>PROTEIN SEQUENCE</scope>
    <scope>FUNCTION</scope>
    <scope>SUBUNIT</scope>
    <source>
        <strain evidence="5">Tu268</strain>
        <tissue evidence="5">Mycelium</tissue>
    </source>
</reference>
<proteinExistence type="evidence at protein level"/>